<dbReference type="EC" id="2.1.1.223" evidence="1"/>
<dbReference type="EMBL" id="CP001616">
    <property type="protein sequence ID" value="ACQ92598.1"/>
    <property type="status" value="ALT_INIT"/>
    <property type="molecule type" value="Genomic_DNA"/>
</dbReference>
<dbReference type="SMR" id="C4LCN4"/>
<dbReference type="STRING" id="595494.Tola_0970"/>
<dbReference type="KEGG" id="tau:Tola_0970"/>
<dbReference type="eggNOG" id="COG4123">
    <property type="taxonomic scope" value="Bacteria"/>
</dbReference>
<dbReference type="HOGENOM" id="CLU_061983_0_0_6"/>
<dbReference type="Proteomes" id="UP000009073">
    <property type="component" value="Chromosome"/>
</dbReference>
<dbReference type="GO" id="GO:0005737">
    <property type="term" value="C:cytoplasm"/>
    <property type="evidence" value="ECO:0007669"/>
    <property type="project" value="UniProtKB-SubCell"/>
</dbReference>
<dbReference type="GO" id="GO:0003676">
    <property type="term" value="F:nucleic acid binding"/>
    <property type="evidence" value="ECO:0007669"/>
    <property type="project" value="InterPro"/>
</dbReference>
<dbReference type="GO" id="GO:0016430">
    <property type="term" value="F:tRNA (adenine-N6)-methyltransferase activity"/>
    <property type="evidence" value="ECO:0007669"/>
    <property type="project" value="UniProtKB-UniRule"/>
</dbReference>
<dbReference type="GO" id="GO:0032259">
    <property type="term" value="P:methylation"/>
    <property type="evidence" value="ECO:0007669"/>
    <property type="project" value="UniProtKB-KW"/>
</dbReference>
<dbReference type="GO" id="GO:0008033">
    <property type="term" value="P:tRNA processing"/>
    <property type="evidence" value="ECO:0007669"/>
    <property type="project" value="UniProtKB-UniRule"/>
</dbReference>
<dbReference type="CDD" id="cd02440">
    <property type="entry name" value="AdoMet_MTases"/>
    <property type="match status" value="1"/>
</dbReference>
<dbReference type="Gene3D" id="3.40.50.150">
    <property type="entry name" value="Vaccinia Virus protein VP39"/>
    <property type="match status" value="1"/>
</dbReference>
<dbReference type="HAMAP" id="MF_01872">
    <property type="entry name" value="tRNA_methyltr_YfiC"/>
    <property type="match status" value="1"/>
</dbReference>
<dbReference type="InterPro" id="IPR002052">
    <property type="entry name" value="DNA_methylase_N6_adenine_CS"/>
</dbReference>
<dbReference type="InterPro" id="IPR029063">
    <property type="entry name" value="SAM-dependent_MTases_sf"/>
</dbReference>
<dbReference type="InterPro" id="IPR007848">
    <property type="entry name" value="Small_mtfrase_dom"/>
</dbReference>
<dbReference type="InterPro" id="IPR050210">
    <property type="entry name" value="tRNA_Adenine-N(6)_MTase"/>
</dbReference>
<dbReference type="InterPro" id="IPR022882">
    <property type="entry name" value="tRNA_adenine-N6_MeTrfase"/>
</dbReference>
<dbReference type="PANTHER" id="PTHR47739">
    <property type="entry name" value="TRNA1(VAL) (ADENINE(37)-N6)-METHYLTRANSFERASE"/>
    <property type="match status" value="1"/>
</dbReference>
<dbReference type="PANTHER" id="PTHR47739:SF1">
    <property type="entry name" value="TRNA1(VAL) (ADENINE(37)-N6)-METHYLTRANSFERASE"/>
    <property type="match status" value="1"/>
</dbReference>
<dbReference type="Pfam" id="PF05175">
    <property type="entry name" value="MTS"/>
    <property type="match status" value="1"/>
</dbReference>
<dbReference type="PRINTS" id="PR00507">
    <property type="entry name" value="N12N6MTFRASE"/>
</dbReference>
<dbReference type="SUPFAM" id="SSF53335">
    <property type="entry name" value="S-adenosyl-L-methionine-dependent methyltransferases"/>
    <property type="match status" value="1"/>
</dbReference>
<dbReference type="PROSITE" id="PS00092">
    <property type="entry name" value="N6_MTASE"/>
    <property type="match status" value="1"/>
</dbReference>
<proteinExistence type="inferred from homology"/>
<organism>
    <name type="scientific">Tolumonas auensis (strain DSM 9187 / NBRC 110442 / TA 4)</name>
    <dbReference type="NCBI Taxonomy" id="595494"/>
    <lineage>
        <taxon>Bacteria</taxon>
        <taxon>Pseudomonadati</taxon>
        <taxon>Pseudomonadota</taxon>
        <taxon>Gammaproteobacteria</taxon>
        <taxon>Aeromonadales</taxon>
        <taxon>Aeromonadaceae</taxon>
        <taxon>Tolumonas</taxon>
    </lineage>
</organism>
<keyword id="KW-0963">Cytoplasm</keyword>
<keyword id="KW-0489">Methyltransferase</keyword>
<keyword id="KW-1185">Reference proteome</keyword>
<keyword id="KW-0949">S-adenosyl-L-methionine</keyword>
<keyword id="KW-0808">Transferase</keyword>
<keyword id="KW-0819">tRNA processing</keyword>
<sequence>MGGHSFTFKQFHIDQDRCAMKVGTDSIVLGSWTPVRGAKRILDIGTGTGILALMLAQRTAQQVQIDAVELDKDAVKQAEENINASPWRERIRVIRHDIRTFQAPHYDLIISNPPYFVHGQTLPDAARQLARHTGELDQTALLESAARLLTPFGKLALVLPVEEGEQLVALATAGGWYLQRRCRVETKRGKAPNLVLLLLSRKPAETEEEQLCLRETDNRYSPEFIALADEFYLRMSA</sequence>
<gene>
    <name type="ordered locus">Tola_0970</name>
</gene>
<protein>
    <recommendedName>
        <fullName evidence="1">tRNA1(Val) (adenine(37)-N6)-methyltransferase</fullName>
        <ecNumber evidence="1">2.1.1.223</ecNumber>
    </recommendedName>
    <alternativeName>
        <fullName evidence="1">tRNA m6A37 methyltransferase</fullName>
    </alternativeName>
</protein>
<name>TRMN6_TOLAT</name>
<reference key="1">
    <citation type="submission" date="2009-05" db="EMBL/GenBank/DDBJ databases">
        <title>Complete sequence of Tolumonas auensis DSM 9187.</title>
        <authorList>
            <consortium name="US DOE Joint Genome Institute"/>
            <person name="Lucas S."/>
            <person name="Copeland A."/>
            <person name="Lapidus A."/>
            <person name="Glavina del Rio T."/>
            <person name="Tice H."/>
            <person name="Bruce D."/>
            <person name="Goodwin L."/>
            <person name="Pitluck S."/>
            <person name="Chertkov O."/>
            <person name="Brettin T."/>
            <person name="Detter J.C."/>
            <person name="Han C."/>
            <person name="Larimer F."/>
            <person name="Land M."/>
            <person name="Hauser L."/>
            <person name="Kyrpides N."/>
            <person name="Mikhailova N."/>
            <person name="Spring S."/>
            <person name="Beller H."/>
        </authorList>
    </citation>
    <scope>NUCLEOTIDE SEQUENCE [LARGE SCALE GENOMIC DNA]</scope>
    <source>
        <strain>DSM 9187 / NBRC 110442 / TA 4</strain>
    </source>
</reference>
<comment type="function">
    <text evidence="1">Specifically methylates the adenine in position 37 of tRNA(1)(Val) (anticodon cmo5UAC).</text>
</comment>
<comment type="catalytic activity">
    <reaction evidence="1">
        <text>adenosine(37) in tRNA1(Val) + S-adenosyl-L-methionine = N(6)-methyladenosine(37) in tRNA1(Val) + S-adenosyl-L-homocysteine + H(+)</text>
        <dbReference type="Rhea" id="RHEA:43160"/>
        <dbReference type="Rhea" id="RHEA-COMP:10369"/>
        <dbReference type="Rhea" id="RHEA-COMP:10370"/>
        <dbReference type="ChEBI" id="CHEBI:15378"/>
        <dbReference type="ChEBI" id="CHEBI:57856"/>
        <dbReference type="ChEBI" id="CHEBI:59789"/>
        <dbReference type="ChEBI" id="CHEBI:74411"/>
        <dbReference type="ChEBI" id="CHEBI:74449"/>
        <dbReference type="EC" id="2.1.1.223"/>
    </reaction>
</comment>
<comment type="subcellular location">
    <subcellularLocation>
        <location evidence="1">Cytoplasm</location>
    </subcellularLocation>
</comment>
<comment type="similarity">
    <text evidence="1">Belongs to the methyltransferase superfamily. tRNA (adenine-N(6)-)-methyltransferase family.</text>
</comment>
<comment type="sequence caution" evidence="2">
    <conflict type="erroneous initiation">
        <sequence resource="EMBL-CDS" id="ACQ92598"/>
    </conflict>
</comment>
<feature type="chain" id="PRO_0000387439" description="tRNA1(Val) (adenine(37)-N6)-methyltransferase">
    <location>
        <begin position="1"/>
        <end position="237"/>
    </location>
</feature>
<evidence type="ECO:0000255" key="1">
    <source>
        <dbReference type="HAMAP-Rule" id="MF_01872"/>
    </source>
</evidence>
<evidence type="ECO:0000305" key="2"/>
<accession>C4LCN4</accession>